<keyword id="KW-0143">Chaperone</keyword>
<keyword id="KW-0963">Cytoplasm</keyword>
<keyword id="KW-1185">Reference proteome</keyword>
<name>SDHE_SALTY</name>
<reference key="1">
    <citation type="journal article" date="2001" name="Nature">
        <title>Complete genome sequence of Salmonella enterica serovar Typhimurium LT2.</title>
        <authorList>
            <person name="McClelland M."/>
            <person name="Sanderson K.E."/>
            <person name="Spieth J."/>
            <person name="Clifton S.W."/>
            <person name="Latreille P."/>
            <person name="Courtney L."/>
            <person name="Porwollik S."/>
            <person name="Ali J."/>
            <person name="Dante M."/>
            <person name="Du F."/>
            <person name="Hou S."/>
            <person name="Layman D."/>
            <person name="Leonard S."/>
            <person name="Nguyen C."/>
            <person name="Scott K."/>
            <person name="Holmes A."/>
            <person name="Grewal N."/>
            <person name="Mulvaney E."/>
            <person name="Ryan E."/>
            <person name="Sun H."/>
            <person name="Florea L."/>
            <person name="Miller W."/>
            <person name="Stoneking T."/>
            <person name="Nhan M."/>
            <person name="Waterston R."/>
            <person name="Wilson R.K."/>
        </authorList>
    </citation>
    <scope>NUCLEOTIDE SEQUENCE [LARGE SCALE GENOMIC DNA]</scope>
    <source>
        <strain>LT2 / SGSC1412 / ATCC 700720</strain>
    </source>
</reference>
<proteinExistence type="inferred from homology"/>
<dbReference type="EMBL" id="AE006468">
    <property type="protein sequence ID" value="AAL21922.1"/>
    <property type="molecule type" value="Genomic_DNA"/>
</dbReference>
<dbReference type="RefSeq" id="NP_461963.1">
    <property type="nucleotide sequence ID" value="NC_003197.2"/>
</dbReference>
<dbReference type="RefSeq" id="WP_000351186.1">
    <property type="nucleotide sequence ID" value="NC_003197.2"/>
</dbReference>
<dbReference type="SMR" id="Q7CPV1"/>
<dbReference type="STRING" id="99287.STM3047"/>
<dbReference type="PaxDb" id="99287-STM3047"/>
<dbReference type="GeneID" id="1254570"/>
<dbReference type="GeneID" id="66757346"/>
<dbReference type="KEGG" id="stm:STM3047"/>
<dbReference type="PATRIC" id="fig|99287.12.peg.3227"/>
<dbReference type="HOGENOM" id="CLU_103054_2_2_6"/>
<dbReference type="OMA" id="FEHEYDT"/>
<dbReference type="PhylomeDB" id="Q7CPV1"/>
<dbReference type="BioCyc" id="SENT99287:STM3047-MONOMER"/>
<dbReference type="Proteomes" id="UP000001014">
    <property type="component" value="Chromosome"/>
</dbReference>
<dbReference type="GO" id="GO:0005737">
    <property type="term" value="C:cytoplasm"/>
    <property type="evidence" value="ECO:0007669"/>
    <property type="project" value="UniProtKB-SubCell"/>
</dbReference>
<dbReference type="GO" id="GO:0006105">
    <property type="term" value="P:succinate metabolic process"/>
    <property type="evidence" value="ECO:0000318"/>
    <property type="project" value="GO_Central"/>
</dbReference>
<dbReference type="FunFam" id="1.10.150.250:FF:000001">
    <property type="entry name" value="FAD assembly factor SdhE"/>
    <property type="match status" value="1"/>
</dbReference>
<dbReference type="Gene3D" id="1.10.150.250">
    <property type="entry name" value="Flavinator of succinate dehydrogenase"/>
    <property type="match status" value="1"/>
</dbReference>
<dbReference type="InterPro" id="IPR005631">
    <property type="entry name" value="SDH"/>
</dbReference>
<dbReference type="InterPro" id="IPR036714">
    <property type="entry name" value="SDH_sf"/>
</dbReference>
<dbReference type="InterPro" id="IPR050531">
    <property type="entry name" value="SdhE_FAD_assembly_factor"/>
</dbReference>
<dbReference type="NCBIfam" id="NF008130">
    <property type="entry name" value="PRK10878.1"/>
    <property type="match status" value="1"/>
</dbReference>
<dbReference type="PANTHER" id="PTHR39585">
    <property type="entry name" value="FAD ASSEMBLY FACTOR SDHE"/>
    <property type="match status" value="1"/>
</dbReference>
<dbReference type="PANTHER" id="PTHR39585:SF1">
    <property type="entry name" value="FAD ASSEMBLY FACTOR SDHE"/>
    <property type="match status" value="1"/>
</dbReference>
<dbReference type="Pfam" id="PF03937">
    <property type="entry name" value="Sdh5"/>
    <property type="match status" value="1"/>
</dbReference>
<dbReference type="SUPFAM" id="SSF109910">
    <property type="entry name" value="YgfY-like"/>
    <property type="match status" value="1"/>
</dbReference>
<comment type="function">
    <text evidence="1">An FAD assembly protein, which accelerates covalent attachment of the cofactor into other proteins. Plays an essential role in the assembly of succinate dehydrogenase (SDH, respiratory complex II), an enzyme complex that is a component of both the tricarboxylic acid cycle and the electron transport chain, and which couples the oxidation of succinate to fumarate with the reduction of ubiquinone (coenzyme Q) to ubiquinol. Required for flavinylation (covalent attachment of FAD) of the flavoprotein subunit SdhA of SDH and other flavinylated proteins as well.</text>
</comment>
<comment type="subunit">
    <text evidence="2">Monomer.</text>
</comment>
<comment type="subcellular location">
    <subcellularLocation>
        <location evidence="1">Cytoplasm</location>
    </subcellularLocation>
</comment>
<comment type="similarity">
    <text evidence="3">Belongs to the SdhE FAD assembly factor family.</text>
</comment>
<organism>
    <name type="scientific">Salmonella typhimurium (strain LT2 / SGSC1412 / ATCC 700720)</name>
    <dbReference type="NCBI Taxonomy" id="99287"/>
    <lineage>
        <taxon>Bacteria</taxon>
        <taxon>Pseudomonadati</taxon>
        <taxon>Pseudomonadota</taxon>
        <taxon>Gammaproteobacteria</taxon>
        <taxon>Enterobacterales</taxon>
        <taxon>Enterobacteriaceae</taxon>
        <taxon>Salmonella</taxon>
    </lineage>
</organism>
<accession>Q7CPV1</accession>
<feature type="chain" id="PRO_0000214422" description="FAD assembly factor SdhE">
    <location>
        <begin position="1"/>
        <end position="88"/>
    </location>
</feature>
<evidence type="ECO:0000250" key="1">
    <source>
        <dbReference type="UniProtKB" id="G4V4G2"/>
    </source>
</evidence>
<evidence type="ECO:0000250" key="2">
    <source>
        <dbReference type="UniProtKB" id="P64559"/>
    </source>
</evidence>
<evidence type="ECO:0000305" key="3"/>
<gene>
    <name type="primary">sdhE</name>
    <name type="synonym">ygfY</name>
    <name type="ordered locus">STM3047</name>
</gene>
<protein>
    <recommendedName>
        <fullName>FAD assembly factor SdhE</fullName>
    </recommendedName>
</protein>
<sequence>MDIHNKARIHWACRRGMRELDISIMPFFEHEYDSLSDEEKRIFVRLLQSDDPDLFNWLMNHGKPADAELEQMVRLIQTRNRERGPVAI</sequence>